<comment type="function">
    <text evidence="1">DNA ligase that catalyzes the formation of phosphodiester linkages between 5'-phosphoryl and 3'-hydroxyl groups in double-stranded DNA using NAD as a coenzyme and as the energy source for the reaction. It is essential for DNA replication and repair of damaged DNA.</text>
</comment>
<comment type="catalytic activity">
    <reaction evidence="1">
        <text>NAD(+) + (deoxyribonucleotide)n-3'-hydroxyl + 5'-phospho-(deoxyribonucleotide)m = (deoxyribonucleotide)n+m + AMP + beta-nicotinamide D-nucleotide.</text>
        <dbReference type="EC" id="6.5.1.2"/>
    </reaction>
</comment>
<comment type="cofactor">
    <cofactor evidence="1">
        <name>Mg(2+)</name>
        <dbReference type="ChEBI" id="CHEBI:18420"/>
    </cofactor>
    <cofactor evidence="1">
        <name>Mn(2+)</name>
        <dbReference type="ChEBI" id="CHEBI:29035"/>
    </cofactor>
</comment>
<comment type="similarity">
    <text evidence="1">Belongs to the NAD-dependent DNA ligase family. LigA subfamily.</text>
</comment>
<proteinExistence type="inferred from homology"/>
<dbReference type="EC" id="6.5.1.2" evidence="1"/>
<dbReference type="EMBL" id="CP000962">
    <property type="protein sequence ID" value="ACA56923.1"/>
    <property type="molecule type" value="Genomic_DNA"/>
</dbReference>
<dbReference type="RefSeq" id="WP_012344727.1">
    <property type="nucleotide sequence ID" value="NC_010520.1"/>
</dbReference>
<dbReference type="SMR" id="B1L1H3"/>
<dbReference type="KEGG" id="cbl:CLK_2687"/>
<dbReference type="HOGENOM" id="CLU_007764_2_1_9"/>
<dbReference type="GO" id="GO:0005829">
    <property type="term" value="C:cytosol"/>
    <property type="evidence" value="ECO:0007669"/>
    <property type="project" value="TreeGrafter"/>
</dbReference>
<dbReference type="GO" id="GO:0003677">
    <property type="term" value="F:DNA binding"/>
    <property type="evidence" value="ECO:0007669"/>
    <property type="project" value="InterPro"/>
</dbReference>
<dbReference type="GO" id="GO:0003911">
    <property type="term" value="F:DNA ligase (NAD+) activity"/>
    <property type="evidence" value="ECO:0007669"/>
    <property type="project" value="UniProtKB-UniRule"/>
</dbReference>
<dbReference type="GO" id="GO:0046872">
    <property type="term" value="F:metal ion binding"/>
    <property type="evidence" value="ECO:0007669"/>
    <property type="project" value="UniProtKB-KW"/>
</dbReference>
<dbReference type="GO" id="GO:0006281">
    <property type="term" value="P:DNA repair"/>
    <property type="evidence" value="ECO:0007669"/>
    <property type="project" value="UniProtKB-KW"/>
</dbReference>
<dbReference type="GO" id="GO:0006260">
    <property type="term" value="P:DNA replication"/>
    <property type="evidence" value="ECO:0007669"/>
    <property type="project" value="UniProtKB-KW"/>
</dbReference>
<dbReference type="CDD" id="cd17748">
    <property type="entry name" value="BRCT_DNA_ligase_like"/>
    <property type="match status" value="1"/>
</dbReference>
<dbReference type="CDD" id="cd09897">
    <property type="entry name" value="H3TH_FEN1-XPG-like"/>
    <property type="match status" value="1"/>
</dbReference>
<dbReference type="CDD" id="cd00114">
    <property type="entry name" value="LIGANc"/>
    <property type="match status" value="1"/>
</dbReference>
<dbReference type="FunFam" id="1.10.150.20:FF:000006">
    <property type="entry name" value="DNA ligase"/>
    <property type="match status" value="1"/>
</dbReference>
<dbReference type="FunFam" id="1.10.150.20:FF:000007">
    <property type="entry name" value="DNA ligase"/>
    <property type="match status" value="1"/>
</dbReference>
<dbReference type="FunFam" id="2.40.50.140:FF:000012">
    <property type="entry name" value="DNA ligase"/>
    <property type="match status" value="1"/>
</dbReference>
<dbReference type="Gene3D" id="1.10.150.20">
    <property type="entry name" value="5' to 3' exonuclease, C-terminal subdomain"/>
    <property type="match status" value="2"/>
</dbReference>
<dbReference type="Gene3D" id="3.40.50.10190">
    <property type="entry name" value="BRCT domain"/>
    <property type="match status" value="1"/>
</dbReference>
<dbReference type="Gene3D" id="3.30.470.30">
    <property type="entry name" value="DNA ligase/mRNA capping enzyme"/>
    <property type="match status" value="1"/>
</dbReference>
<dbReference type="Gene3D" id="1.10.287.610">
    <property type="entry name" value="Helix hairpin bin"/>
    <property type="match status" value="1"/>
</dbReference>
<dbReference type="Gene3D" id="2.40.50.140">
    <property type="entry name" value="Nucleic acid-binding proteins"/>
    <property type="match status" value="1"/>
</dbReference>
<dbReference type="HAMAP" id="MF_01588">
    <property type="entry name" value="DNA_ligase_A"/>
    <property type="match status" value="1"/>
</dbReference>
<dbReference type="InterPro" id="IPR001357">
    <property type="entry name" value="BRCT_dom"/>
</dbReference>
<dbReference type="InterPro" id="IPR036420">
    <property type="entry name" value="BRCT_dom_sf"/>
</dbReference>
<dbReference type="InterPro" id="IPR041663">
    <property type="entry name" value="DisA/LigA_HHH"/>
</dbReference>
<dbReference type="InterPro" id="IPR001679">
    <property type="entry name" value="DNA_ligase"/>
</dbReference>
<dbReference type="InterPro" id="IPR033136">
    <property type="entry name" value="DNA_ligase_CS"/>
</dbReference>
<dbReference type="InterPro" id="IPR013839">
    <property type="entry name" value="DNAligase_adenylation"/>
</dbReference>
<dbReference type="InterPro" id="IPR013840">
    <property type="entry name" value="DNAligase_N"/>
</dbReference>
<dbReference type="InterPro" id="IPR003583">
    <property type="entry name" value="Hlx-hairpin-Hlx_DNA-bd_motif"/>
</dbReference>
<dbReference type="InterPro" id="IPR012340">
    <property type="entry name" value="NA-bd_OB-fold"/>
</dbReference>
<dbReference type="InterPro" id="IPR004150">
    <property type="entry name" value="NAD_DNA_ligase_OB"/>
</dbReference>
<dbReference type="InterPro" id="IPR010994">
    <property type="entry name" value="RuvA_2-like"/>
</dbReference>
<dbReference type="NCBIfam" id="TIGR00575">
    <property type="entry name" value="dnlj"/>
    <property type="match status" value="1"/>
</dbReference>
<dbReference type="NCBIfam" id="NF005932">
    <property type="entry name" value="PRK07956.1"/>
    <property type="match status" value="1"/>
</dbReference>
<dbReference type="PANTHER" id="PTHR23389">
    <property type="entry name" value="CHROMOSOME TRANSMISSION FIDELITY FACTOR 18"/>
    <property type="match status" value="1"/>
</dbReference>
<dbReference type="PANTHER" id="PTHR23389:SF9">
    <property type="entry name" value="DNA LIGASE"/>
    <property type="match status" value="1"/>
</dbReference>
<dbReference type="Pfam" id="PF00533">
    <property type="entry name" value="BRCT"/>
    <property type="match status" value="1"/>
</dbReference>
<dbReference type="Pfam" id="PF01653">
    <property type="entry name" value="DNA_ligase_aden"/>
    <property type="match status" value="1"/>
</dbReference>
<dbReference type="Pfam" id="PF03120">
    <property type="entry name" value="DNA_ligase_OB"/>
    <property type="match status" value="1"/>
</dbReference>
<dbReference type="Pfam" id="PF12826">
    <property type="entry name" value="HHH_2"/>
    <property type="match status" value="1"/>
</dbReference>
<dbReference type="Pfam" id="PF14520">
    <property type="entry name" value="HHH_5"/>
    <property type="match status" value="1"/>
</dbReference>
<dbReference type="PIRSF" id="PIRSF001604">
    <property type="entry name" value="LigA"/>
    <property type="match status" value="1"/>
</dbReference>
<dbReference type="SMART" id="SM00292">
    <property type="entry name" value="BRCT"/>
    <property type="match status" value="1"/>
</dbReference>
<dbReference type="SMART" id="SM00278">
    <property type="entry name" value="HhH1"/>
    <property type="match status" value="4"/>
</dbReference>
<dbReference type="SMART" id="SM00532">
    <property type="entry name" value="LIGANc"/>
    <property type="match status" value="1"/>
</dbReference>
<dbReference type="SUPFAM" id="SSF52113">
    <property type="entry name" value="BRCT domain"/>
    <property type="match status" value="1"/>
</dbReference>
<dbReference type="SUPFAM" id="SSF56091">
    <property type="entry name" value="DNA ligase/mRNA capping enzyme, catalytic domain"/>
    <property type="match status" value="1"/>
</dbReference>
<dbReference type="SUPFAM" id="SSF50249">
    <property type="entry name" value="Nucleic acid-binding proteins"/>
    <property type="match status" value="1"/>
</dbReference>
<dbReference type="SUPFAM" id="SSF47781">
    <property type="entry name" value="RuvA domain 2-like"/>
    <property type="match status" value="1"/>
</dbReference>
<dbReference type="PROSITE" id="PS50172">
    <property type="entry name" value="BRCT"/>
    <property type="match status" value="1"/>
</dbReference>
<dbReference type="PROSITE" id="PS01056">
    <property type="entry name" value="DNA_LIGASE_N2"/>
    <property type="match status" value="1"/>
</dbReference>
<accession>B1L1H3</accession>
<name>DNLJ_CLOBM</name>
<reference key="1">
    <citation type="journal article" date="2007" name="PLoS ONE">
        <title>Analysis of the neurotoxin complex genes in Clostridium botulinum A1-A4 and B1 strains: BoNT/A3, /Ba4 and /B1 clusters are located within plasmids.</title>
        <authorList>
            <person name="Smith T.J."/>
            <person name="Hill K.K."/>
            <person name="Foley B.T."/>
            <person name="Detter J.C."/>
            <person name="Munk A.C."/>
            <person name="Bruce D.C."/>
            <person name="Doggett N.A."/>
            <person name="Smith L.A."/>
            <person name="Marks J.D."/>
            <person name="Xie G."/>
            <person name="Brettin T.S."/>
        </authorList>
    </citation>
    <scope>NUCLEOTIDE SEQUENCE [LARGE SCALE GENOMIC DNA]</scope>
    <source>
        <strain>Loch Maree / Type A3</strain>
    </source>
</reference>
<protein>
    <recommendedName>
        <fullName evidence="1">DNA ligase</fullName>
        <ecNumber evidence="1">6.5.1.2</ecNumber>
    </recommendedName>
    <alternativeName>
        <fullName evidence="1">Polydeoxyribonucleotide synthase [NAD(+)]</fullName>
    </alternativeName>
</protein>
<evidence type="ECO:0000255" key="1">
    <source>
        <dbReference type="HAMAP-Rule" id="MF_01588"/>
    </source>
</evidence>
<feature type="chain" id="PRO_0000380344" description="DNA ligase">
    <location>
        <begin position="1"/>
        <end position="664"/>
    </location>
</feature>
<feature type="domain" description="BRCT" evidence="1">
    <location>
        <begin position="587"/>
        <end position="664"/>
    </location>
</feature>
<feature type="active site" description="N6-AMP-lysine intermediate" evidence="1">
    <location>
        <position position="122"/>
    </location>
</feature>
<feature type="binding site" evidence="1">
    <location>
        <begin position="32"/>
        <end position="36"/>
    </location>
    <ligand>
        <name>NAD(+)</name>
        <dbReference type="ChEBI" id="CHEBI:57540"/>
    </ligand>
</feature>
<feature type="binding site" evidence="1">
    <location>
        <begin position="80"/>
        <end position="81"/>
    </location>
    <ligand>
        <name>NAD(+)</name>
        <dbReference type="ChEBI" id="CHEBI:57540"/>
    </ligand>
</feature>
<feature type="binding site" evidence="1">
    <location>
        <position position="144"/>
    </location>
    <ligand>
        <name>NAD(+)</name>
        <dbReference type="ChEBI" id="CHEBI:57540"/>
    </ligand>
</feature>
<feature type="binding site" evidence="1">
    <location>
        <position position="178"/>
    </location>
    <ligand>
        <name>NAD(+)</name>
        <dbReference type="ChEBI" id="CHEBI:57540"/>
    </ligand>
</feature>
<feature type="binding site" evidence="1">
    <location>
        <position position="314"/>
    </location>
    <ligand>
        <name>NAD(+)</name>
        <dbReference type="ChEBI" id="CHEBI:57540"/>
    </ligand>
</feature>
<feature type="binding site" evidence="1">
    <location>
        <position position="407"/>
    </location>
    <ligand>
        <name>Zn(2+)</name>
        <dbReference type="ChEBI" id="CHEBI:29105"/>
    </ligand>
</feature>
<feature type="binding site" evidence="1">
    <location>
        <position position="410"/>
    </location>
    <ligand>
        <name>Zn(2+)</name>
        <dbReference type="ChEBI" id="CHEBI:29105"/>
    </ligand>
</feature>
<feature type="binding site" evidence="1">
    <location>
        <position position="423"/>
    </location>
    <ligand>
        <name>Zn(2+)</name>
        <dbReference type="ChEBI" id="CHEBI:29105"/>
    </ligand>
</feature>
<feature type="binding site" evidence="1">
    <location>
        <position position="429"/>
    </location>
    <ligand>
        <name>Zn(2+)</name>
        <dbReference type="ChEBI" id="CHEBI:29105"/>
    </ligand>
</feature>
<gene>
    <name evidence="1" type="primary">ligA</name>
    <name type="ordered locus">CLK_2687</name>
</gene>
<sequence>MDNKLEKMKELVEELNQYAYEYYVLDNPSISDKEYDLKYDELVILEKKTEVTLPYSPTQRVGDKILGEFSKYTHKGRLWSLDKAQNMEQLIEWHNRNLKVIEQYNSMSEDKLPELRYIVTKKFDGLTVNCTYDENGILIKSATRGTGIIGEDITAQIKTIKTVPLKIKNNHIIEVHGEAIMTKTAFEEYNKAAQVPLKNLRNGAAGALRNLDIKETARRNLSAFFYDVGYNEGSEFKNYREMMNFIRNMGLPQDKYIKECTNMEEVEKEIEYIESIREELDYDIDGAVIVVDDIKTREILGYTIKFPKWAIAYKFEAKEITTRLLDVEWNVGRSGRVTPTALLEPVELGGVTVKRATLNNMDDIKRKNVKLGAKVLVRRSNDVIPEIMGVAEESLEESKEIQAPDRCPYCNSHLVQNGVHYYCENTLSCKPQMVKSIVHFASREAMNIAGFSEKTAEQLFEKLDIKSIADLYKIKKEELLTLEKFKDKKSQNLINAIQNSKNCDLASFIYALGIPNVGKKTANDLVMKFKTLESIKNTTIEQLVEVPDVGEIVAKSIYDFFEDEKIISNIEELLNLGVKPYYEEERIDENPFMDKTIVVTGSLNNYSRGEIKDKLQSLGAKVSSSVSKNTDYVLVGEKPGSKYEKAIELGVKVINEEEFSNKIK</sequence>
<keyword id="KW-0227">DNA damage</keyword>
<keyword id="KW-0234">DNA repair</keyword>
<keyword id="KW-0235">DNA replication</keyword>
<keyword id="KW-0436">Ligase</keyword>
<keyword id="KW-0460">Magnesium</keyword>
<keyword id="KW-0464">Manganese</keyword>
<keyword id="KW-0479">Metal-binding</keyword>
<keyword id="KW-0520">NAD</keyword>
<keyword id="KW-0862">Zinc</keyword>
<organism>
    <name type="scientific">Clostridium botulinum (strain Loch Maree / Type A3)</name>
    <dbReference type="NCBI Taxonomy" id="498214"/>
    <lineage>
        <taxon>Bacteria</taxon>
        <taxon>Bacillati</taxon>
        <taxon>Bacillota</taxon>
        <taxon>Clostridia</taxon>
        <taxon>Eubacteriales</taxon>
        <taxon>Clostridiaceae</taxon>
        <taxon>Clostridium</taxon>
    </lineage>
</organism>